<dbReference type="EMBL" id="BA000018">
    <property type="protein sequence ID" value="BAB42227.1"/>
    <property type="molecule type" value="Genomic_DNA"/>
</dbReference>
<dbReference type="PIR" id="G89883">
    <property type="entry name" value="G89883"/>
</dbReference>
<dbReference type="RefSeq" id="WP_000789821.1">
    <property type="nucleotide sequence ID" value="NC_002745.2"/>
</dbReference>
<dbReference type="SMR" id="Q7A654"/>
<dbReference type="EnsemblBacteria" id="BAB42227">
    <property type="protein sequence ID" value="BAB42227"/>
    <property type="gene ID" value="BAB42227"/>
</dbReference>
<dbReference type="KEGG" id="sau:SA0978"/>
<dbReference type="HOGENOM" id="CLU_092243_1_0_9"/>
<dbReference type="GO" id="GO:0005576">
    <property type="term" value="C:extracellular region"/>
    <property type="evidence" value="ECO:0007669"/>
    <property type="project" value="UniProtKB-KW"/>
</dbReference>
<dbReference type="GO" id="GO:0009274">
    <property type="term" value="C:peptidoglycan-based cell wall"/>
    <property type="evidence" value="ECO:0007669"/>
    <property type="project" value="InterPro"/>
</dbReference>
<dbReference type="GO" id="GO:0030492">
    <property type="term" value="F:hemoglobin binding"/>
    <property type="evidence" value="ECO:0007669"/>
    <property type="project" value="InterPro"/>
</dbReference>
<dbReference type="GO" id="GO:0046872">
    <property type="term" value="F:metal ion binding"/>
    <property type="evidence" value="ECO:0007669"/>
    <property type="project" value="UniProtKB-KW"/>
</dbReference>
<dbReference type="GO" id="GO:0015886">
    <property type="term" value="P:heme transport"/>
    <property type="evidence" value="ECO:0007669"/>
    <property type="project" value="InterPro"/>
</dbReference>
<dbReference type="CDD" id="cd06920">
    <property type="entry name" value="NEAT"/>
    <property type="match status" value="1"/>
</dbReference>
<dbReference type="Gene3D" id="2.60.40.1850">
    <property type="match status" value="1"/>
</dbReference>
<dbReference type="InterPro" id="IPR019909">
    <property type="entry name" value="Haem_uptake_protein_IsdC"/>
</dbReference>
<dbReference type="InterPro" id="IPR050436">
    <property type="entry name" value="IsdA"/>
</dbReference>
<dbReference type="InterPro" id="IPR006635">
    <property type="entry name" value="NEAT_dom"/>
</dbReference>
<dbReference type="InterPro" id="IPR037250">
    <property type="entry name" value="NEAT_dom_sf"/>
</dbReference>
<dbReference type="InterPro" id="IPR017505">
    <property type="entry name" value="Sortase_SrtB_sig_NPQTN"/>
</dbReference>
<dbReference type="NCBIfam" id="TIGR03656">
    <property type="entry name" value="IsdC"/>
    <property type="match status" value="1"/>
</dbReference>
<dbReference type="NCBIfam" id="TIGR03068">
    <property type="entry name" value="srtB_sig_NPQTN"/>
    <property type="match status" value="1"/>
</dbReference>
<dbReference type="PANTHER" id="PTHR37824">
    <property type="entry name" value="IRON-REGULATED SURFACE DETERMINANT PROTEIN C"/>
    <property type="match status" value="1"/>
</dbReference>
<dbReference type="PANTHER" id="PTHR37824:SF1">
    <property type="entry name" value="IRON-REGULATED SURFACE DETERMINANT PROTEIN C"/>
    <property type="match status" value="1"/>
</dbReference>
<dbReference type="Pfam" id="PF05031">
    <property type="entry name" value="NEAT"/>
    <property type="match status" value="1"/>
</dbReference>
<dbReference type="SMART" id="SM00725">
    <property type="entry name" value="NEAT"/>
    <property type="match status" value="1"/>
</dbReference>
<dbReference type="SUPFAM" id="SSF158911">
    <property type="entry name" value="NEAT domain-like"/>
    <property type="match status" value="1"/>
</dbReference>
<dbReference type="PROSITE" id="PS50978">
    <property type="entry name" value="NEAT"/>
    <property type="match status" value="1"/>
</dbReference>
<name>ISDC_STAAN</name>
<proteinExistence type="inferred from homology"/>
<protein>
    <recommendedName>
        <fullName>Iron-regulated surface determinant protein C</fullName>
    </recommendedName>
    <alternativeName>
        <fullName>Staphylococcal iron-regulated protein D</fullName>
    </alternativeName>
</protein>
<reference key="1">
    <citation type="journal article" date="2001" name="Lancet">
        <title>Whole genome sequencing of meticillin-resistant Staphylococcus aureus.</title>
        <authorList>
            <person name="Kuroda M."/>
            <person name="Ohta T."/>
            <person name="Uchiyama I."/>
            <person name="Baba T."/>
            <person name="Yuzawa H."/>
            <person name="Kobayashi I."/>
            <person name="Cui L."/>
            <person name="Oguchi A."/>
            <person name="Aoki K."/>
            <person name="Nagai Y."/>
            <person name="Lian J.-Q."/>
            <person name="Ito T."/>
            <person name="Kanamori M."/>
            <person name="Matsumaru H."/>
            <person name="Maruyama A."/>
            <person name="Murakami H."/>
            <person name="Hosoyama A."/>
            <person name="Mizutani-Ui Y."/>
            <person name="Takahashi N.K."/>
            <person name="Sawano T."/>
            <person name="Inoue R."/>
            <person name="Kaito C."/>
            <person name="Sekimizu K."/>
            <person name="Hirakawa H."/>
            <person name="Kuhara S."/>
            <person name="Goto S."/>
            <person name="Yabuzaki J."/>
            <person name="Kanehisa M."/>
            <person name="Yamashita A."/>
            <person name="Oshima K."/>
            <person name="Furuya K."/>
            <person name="Yoshino C."/>
            <person name="Shiba T."/>
            <person name="Hattori M."/>
            <person name="Ogasawara N."/>
            <person name="Hayashi H."/>
            <person name="Hiramatsu K."/>
        </authorList>
    </citation>
    <scope>NUCLEOTIDE SEQUENCE [LARGE SCALE GENOMIC DNA]</scope>
    <source>
        <strain>N315</strain>
    </source>
</reference>
<evidence type="ECO:0000250" key="1"/>
<evidence type="ECO:0000250" key="2">
    <source>
        <dbReference type="UniProtKB" id="Q8KQR1"/>
    </source>
</evidence>
<evidence type="ECO:0000255" key="3"/>
<evidence type="ECO:0000255" key="4">
    <source>
        <dbReference type="PROSITE-ProRule" id="PRU00337"/>
    </source>
</evidence>
<evidence type="ECO:0000256" key="5">
    <source>
        <dbReference type="SAM" id="MobiDB-lite"/>
    </source>
</evidence>
<evidence type="ECO:0000305" key="6"/>
<comment type="function">
    <text evidence="1">Involved in heme (porphyrin) scavenging. Binds hemoglobin and almost exclusively free-base protoporphyrin IX. Probably has a role as the central conduit of the isd heme uptake system, i.e. mediates the transfer of the iron-containing nutrient from IsdABH to the membrane translocation system IsdDEF. Hemin-free IsdC (apo-IsdC) acquires hemin from hemin-containing IsdA (holo-IsdA) probably through the activated holo-IsdA-apo-IsdC complex and due to the higher affinity of apo-IsdC for the cofactor. The reaction is reversible (By similarity).</text>
</comment>
<comment type="subunit">
    <text evidence="1">Monomer. Interacts with IsdA (By similarity).</text>
</comment>
<comment type="subcellular location">
    <subcellularLocation>
        <location evidence="1">Secreted</location>
        <location evidence="1">Cell wall</location>
        <topology evidence="1">Peptidoglycan-anchor</topology>
    </subcellularLocation>
    <text evidence="2">Anchored to the cell wall by sortase B (By similarity).</text>
</comment>
<comment type="induction">
    <text evidence="1">Repressed by fur in the presence of iron.</text>
</comment>
<comment type="domain">
    <text evidence="1">The NEAT domain binds Fe(3+) heme iron. Reduction of the high-spin Fe(3+) heme iron to high-spin Fe(2+) results in loss of the heme from the binding site of the protein due to the absence of a proximal histidine (By similarity).</text>
</comment>
<comment type="similarity">
    <text evidence="6">Belongs to the IsdC family.</text>
</comment>
<accession>Q7A654</accession>
<feature type="signal peptide" evidence="3">
    <location>
        <begin position="1"/>
        <end position="28"/>
    </location>
</feature>
<feature type="chain" id="PRO_0000019446" description="Iron-regulated surface determinant protein C">
    <location>
        <begin position="29"/>
        <end position="192"/>
    </location>
</feature>
<feature type="propeptide" id="PRO_0000019447" description="Removed by sortase B" evidence="2">
    <location>
        <begin position="193"/>
        <end position="227"/>
    </location>
</feature>
<feature type="domain" description="NEAT" evidence="4">
    <location>
        <begin position="29"/>
        <end position="150"/>
    </location>
</feature>
<feature type="region of interest" description="Disordered" evidence="5">
    <location>
        <begin position="149"/>
        <end position="191"/>
    </location>
</feature>
<feature type="short sequence motif" description="NPQTN sorting signal" evidence="2">
    <location>
        <begin position="189"/>
        <end position="193"/>
    </location>
</feature>
<feature type="compositionally biased region" description="Low complexity" evidence="5">
    <location>
        <begin position="161"/>
        <end position="175"/>
    </location>
</feature>
<feature type="binding site" evidence="2">
    <location>
        <position position="47"/>
    </location>
    <ligand>
        <name>heme</name>
        <dbReference type="ChEBI" id="CHEBI:30413"/>
    </ligand>
</feature>
<feature type="binding site" evidence="2">
    <location>
        <position position="48"/>
    </location>
    <ligand>
        <name>heme</name>
        <dbReference type="ChEBI" id="CHEBI:30413"/>
    </ligand>
</feature>
<feature type="binding site" description="axial binding residue" evidence="1">
    <location>
        <position position="132"/>
    </location>
    <ligand>
        <name>heme</name>
        <dbReference type="ChEBI" id="CHEBI:30413"/>
    </ligand>
    <ligandPart>
        <name>Fe</name>
        <dbReference type="ChEBI" id="CHEBI:18248"/>
    </ligandPart>
</feature>
<feature type="binding site" evidence="2">
    <location>
        <position position="136"/>
    </location>
    <ligand>
        <name>heme</name>
        <dbReference type="ChEBI" id="CHEBI:30413"/>
    </ligand>
</feature>
<feature type="modified residue" description="Pentaglycyl murein peptidoglycan amidated threonine" evidence="2">
    <location>
        <position position="192"/>
    </location>
</feature>
<gene>
    <name type="primary">isdC</name>
    <name type="synonym">sirD</name>
    <name type="ordered locus">SA0978</name>
</gene>
<organism>
    <name type="scientific">Staphylococcus aureus (strain N315)</name>
    <dbReference type="NCBI Taxonomy" id="158879"/>
    <lineage>
        <taxon>Bacteria</taxon>
        <taxon>Bacillati</taxon>
        <taxon>Bacillota</taxon>
        <taxon>Bacilli</taxon>
        <taxon>Bacillales</taxon>
        <taxon>Staphylococcaceae</taxon>
        <taxon>Staphylococcus</taxon>
    </lineage>
</organism>
<keyword id="KW-0134">Cell wall</keyword>
<keyword id="KW-0349">Heme</keyword>
<keyword id="KW-0408">Iron</keyword>
<keyword id="KW-0479">Metal-binding</keyword>
<keyword id="KW-0572">Peptidoglycan-anchor</keyword>
<keyword id="KW-0964">Secreted</keyword>
<keyword id="KW-0732">Signal</keyword>
<sequence length="227" mass="24855">MKNILKVFNTTILALIIIIATFSNSANAADSGTLNYEVYKYNTNDTSIANDYFNKPAKYIKKNGKLYVQITVNHSHWITGMSIEGHKENIISKNTAKDERTSEFEVSKLNGKIDGKIDVYIDEKVNGKPFKYDHHYNITYKFNGPTDVAGANAPGKDDKNSASGSDKGSDGTTTGQSESNSSNKDKVENPQTNAGTPAYIYAIPVASLALLIAITLFVRKKSKGNVE</sequence>